<protein>
    <recommendedName>
        <fullName evidence="2">Acyl-coenzyme A diphosphatase FITM2</fullName>
        <ecNumber evidence="2">3.6.1.-</ecNumber>
    </recommendedName>
    <alternativeName>
        <fullName evidence="6">FIT family protein fitm-2</fullName>
    </alternativeName>
    <alternativeName>
        <fullName evidence="6">Fat storage-inducing transmembrane homolog 2</fullName>
    </alternativeName>
    <alternativeName>
        <fullName evidence="2">Fat storage-inducing transmembrane protein 2</fullName>
    </alternativeName>
    <alternativeName>
        <fullName evidence="2">Fat-inducing protein 2</fullName>
    </alternativeName>
</protein>
<keyword id="KW-0256">Endoplasmic reticulum</keyword>
<keyword id="KW-0378">Hydrolase</keyword>
<keyword id="KW-0443">Lipid metabolism</keyword>
<keyword id="KW-0472">Membrane</keyword>
<keyword id="KW-1185">Reference proteome</keyword>
<keyword id="KW-0812">Transmembrane</keyword>
<keyword id="KW-1133">Transmembrane helix</keyword>
<comment type="function">
    <text evidence="2 4">Fatty acyl-coenzyme A (CoA) diphosphatase that hydrolyzes fatty acyl-CoA to yield acyl-4'-phosphopantetheine and adenosine 3',5'-bisphosphate (By similarity). Preferentially hydrolyzes unsaturated long-chain acyl-CoA substrates in the endoplasmic reticulum (ER) lumen (By similarity). This catalytic activity is required for maintaining ER structure and for lipid droplets (LDs) biogenesis, which are lipid storage organelles involved in maintaining lipid and energy homeostasis (By similarity) (PubMed:26504167). May directly bind to diacylglycerol (DAGs) and triacylglycerol, which is also important for LD biogenesis (By similarity). May support directional budding of nacent LDs from the ER into the cytosol by reducing DAG levels at sites of LD formation (By similarity). May play a role in the regulation of cell morphology, ER morphology and cytoskeletal organization (By similarity).</text>
</comment>
<comment type="catalytic activity">
    <reaction evidence="2">
        <text>an acyl-CoA + H2O = an acyl-4'-phosphopantetheine + adenosine 3',5'-bisphosphate + 2 H(+)</text>
        <dbReference type="Rhea" id="RHEA:50044"/>
        <dbReference type="ChEBI" id="CHEBI:15377"/>
        <dbReference type="ChEBI" id="CHEBI:15378"/>
        <dbReference type="ChEBI" id="CHEBI:58342"/>
        <dbReference type="ChEBI" id="CHEBI:58343"/>
        <dbReference type="ChEBI" id="CHEBI:132023"/>
    </reaction>
    <physiologicalReaction direction="left-to-right" evidence="2">
        <dbReference type="Rhea" id="RHEA:50045"/>
    </physiologicalReaction>
</comment>
<comment type="subcellular location">
    <subcellularLocation>
        <location evidence="2">Endoplasmic reticulum membrane</location>
        <topology evidence="2">Multi-pass membrane protein</topology>
    </subcellularLocation>
</comment>
<comment type="similarity">
    <text evidence="2">Belongs to the FIT family. FIT2 subfamily.</text>
</comment>
<evidence type="ECO:0000255" key="1"/>
<evidence type="ECO:0000255" key="2">
    <source>
        <dbReference type="HAMAP-Rule" id="MF_03230"/>
    </source>
</evidence>
<evidence type="ECO:0000256" key="3">
    <source>
        <dbReference type="SAM" id="MobiDB-lite"/>
    </source>
</evidence>
<evidence type="ECO:0000269" key="4">
    <source>
    </source>
</evidence>
<evidence type="ECO:0000305" key="5"/>
<evidence type="ECO:0000312" key="6">
    <source>
        <dbReference type="WormBase" id="ZK265.9"/>
    </source>
</evidence>
<reference key="1">
    <citation type="journal article" date="1998" name="Science">
        <title>Genome sequence of the nematode C. elegans: a platform for investigating biology.</title>
        <authorList>
            <consortium name="The C. elegans sequencing consortium"/>
        </authorList>
    </citation>
    <scope>NUCLEOTIDE SEQUENCE [LARGE SCALE GENOMIC DNA]</scope>
    <source>
        <strain>Bristol N2</strain>
    </source>
</reference>
<reference key="2">
    <citation type="journal article" date="2015" name="J. Cell Biol.">
        <title>A conserved family of proteins facilitates nascent lipid droplet budding from the ER.</title>
        <authorList>
            <person name="Choudhary V."/>
            <person name="Ojha N."/>
            <person name="Golden A."/>
            <person name="Prinz W.A."/>
        </authorList>
    </citation>
    <scope>FUNCTION</scope>
</reference>
<organism>
    <name type="scientific">Caenorhabditis elegans</name>
    <dbReference type="NCBI Taxonomy" id="6239"/>
    <lineage>
        <taxon>Eukaryota</taxon>
        <taxon>Metazoa</taxon>
        <taxon>Ecdysozoa</taxon>
        <taxon>Nematoda</taxon>
        <taxon>Chromadorea</taxon>
        <taxon>Rhabditida</taxon>
        <taxon>Rhabditina</taxon>
        <taxon>Rhabditomorpha</taxon>
        <taxon>Rhabditoidea</taxon>
        <taxon>Rhabditidae</taxon>
        <taxon>Peloderinae</taxon>
        <taxon>Caenorhabditis</taxon>
    </lineage>
</organism>
<name>FITM2_CAEEL</name>
<accession>Q5CZ37</accession>
<dbReference type="EC" id="3.6.1.-" evidence="2"/>
<dbReference type="EMBL" id="Z81143">
    <property type="protein sequence ID" value="CAI58649.1"/>
    <property type="molecule type" value="Genomic_DNA"/>
</dbReference>
<dbReference type="RefSeq" id="NP_001021865.1">
    <property type="nucleotide sequence ID" value="NM_001026694.7"/>
</dbReference>
<dbReference type="FunCoup" id="Q5CZ37">
    <property type="interactions" value="838"/>
</dbReference>
<dbReference type="STRING" id="6239.ZK265.9.2"/>
<dbReference type="PaxDb" id="6239-ZK265.9"/>
<dbReference type="PeptideAtlas" id="Q5CZ37"/>
<dbReference type="EnsemblMetazoa" id="ZK265.9.1">
    <property type="protein sequence ID" value="ZK265.9.1"/>
    <property type="gene ID" value="WBGene00044094"/>
</dbReference>
<dbReference type="GeneID" id="3565961"/>
<dbReference type="KEGG" id="cel:CELE_ZK265.9"/>
<dbReference type="UCSC" id="ZK265.9">
    <property type="organism name" value="c. elegans"/>
</dbReference>
<dbReference type="AGR" id="WB:WBGene00044094"/>
<dbReference type="CTD" id="3565961"/>
<dbReference type="WormBase" id="ZK265.9">
    <property type="protein sequence ID" value="CE38132"/>
    <property type="gene ID" value="WBGene00044094"/>
    <property type="gene designation" value="fitm-2"/>
</dbReference>
<dbReference type="eggNOG" id="KOG3750">
    <property type="taxonomic scope" value="Eukaryota"/>
</dbReference>
<dbReference type="GeneTree" id="ENSGT00530000063693"/>
<dbReference type="HOGENOM" id="CLU_049499_0_0_1"/>
<dbReference type="InParanoid" id="Q5CZ37"/>
<dbReference type="OMA" id="TYRFWYL"/>
<dbReference type="OrthoDB" id="5579088at2759"/>
<dbReference type="PhylomeDB" id="Q5CZ37"/>
<dbReference type="Reactome" id="R-CEL-8964572">
    <property type="pathway name" value="Lipid particle organization"/>
</dbReference>
<dbReference type="PRO" id="PR:Q5CZ37"/>
<dbReference type="Proteomes" id="UP000001940">
    <property type="component" value="Chromosome I"/>
</dbReference>
<dbReference type="Bgee" id="WBGene00044094">
    <property type="expression patterns" value="Expressed in germ line (C elegans) and 4 other cell types or tissues"/>
</dbReference>
<dbReference type="GO" id="GO:0005789">
    <property type="term" value="C:endoplasmic reticulum membrane"/>
    <property type="evidence" value="ECO:0000318"/>
    <property type="project" value="GO_Central"/>
</dbReference>
<dbReference type="GO" id="GO:0010945">
    <property type="term" value="F:coenzyme A diphosphatase activity"/>
    <property type="evidence" value="ECO:0000250"/>
    <property type="project" value="UniProtKB"/>
</dbReference>
<dbReference type="GO" id="GO:0036115">
    <property type="term" value="P:fatty-acyl-CoA catabolic process"/>
    <property type="evidence" value="ECO:0000250"/>
    <property type="project" value="UniProtKB"/>
</dbReference>
<dbReference type="GO" id="GO:0140042">
    <property type="term" value="P:lipid droplet formation"/>
    <property type="evidence" value="ECO:0000315"/>
    <property type="project" value="UniProtKB"/>
</dbReference>
<dbReference type="GO" id="GO:0034389">
    <property type="term" value="P:lipid droplet organization"/>
    <property type="evidence" value="ECO:0000318"/>
    <property type="project" value="GO_Central"/>
</dbReference>
<dbReference type="GO" id="GO:0055088">
    <property type="term" value="P:lipid homeostasis"/>
    <property type="evidence" value="ECO:0000250"/>
    <property type="project" value="UniProtKB"/>
</dbReference>
<dbReference type="GO" id="GO:0019915">
    <property type="term" value="P:lipid storage"/>
    <property type="evidence" value="ECO:0000318"/>
    <property type="project" value="GO_Central"/>
</dbReference>
<dbReference type="GO" id="GO:0008654">
    <property type="term" value="P:phospholipid biosynthetic process"/>
    <property type="evidence" value="ECO:0000318"/>
    <property type="project" value="GO_Central"/>
</dbReference>
<dbReference type="HAMAP" id="MF_03230">
    <property type="entry name" value="FITM2"/>
    <property type="match status" value="1"/>
</dbReference>
<dbReference type="InterPro" id="IPR019388">
    <property type="entry name" value="FIT"/>
</dbReference>
<dbReference type="InterPro" id="IPR046401">
    <property type="entry name" value="FITM1/2"/>
</dbReference>
<dbReference type="PANTHER" id="PTHR23129">
    <property type="entry name" value="ACYL-COENZYME A DIPHOSPHATASE FITM2"/>
    <property type="match status" value="1"/>
</dbReference>
<dbReference type="PANTHER" id="PTHR23129:SF0">
    <property type="entry name" value="ACYL-COENZYME A DIPHOSPHATASE FITM2"/>
    <property type="match status" value="1"/>
</dbReference>
<dbReference type="Pfam" id="PF10261">
    <property type="entry name" value="FIT"/>
    <property type="match status" value="2"/>
</dbReference>
<proteinExistence type="inferred from homology"/>
<sequence>MSTRRSSTRADSTTKRPASPNSTPNAALGIFVAIARQILFIDARKVALFYLAFVTVLSFIESRIELDSTYYLVQKHSVLNQYGVKMGWFWTLVIVGPFIWFSSKAHNRRDRDQPIVDVCRLGVGTACWYFSVQFFHKVLALTSMCDKGRTLTRAQCSEKEGVWTPGYDISGHCFLMIYSILIITEEAIAYRHYQQVTDAVHQMDGDREEHDRLTRCIQYFFVAMLFLHAFWFKQIIISVLYYHIFIEEILGAVAAVVCWFVTYRMLYPAGFLASPIRRTVGRK</sequence>
<feature type="chain" id="PRO_0000350635" description="Acyl-coenzyme A diphosphatase FITM2" evidence="5">
    <location>
        <begin position="1"/>
        <end position="283"/>
    </location>
</feature>
<feature type="topological domain" description="Cytoplasmic" evidence="5">
    <location>
        <begin position="1"/>
        <end position="39"/>
    </location>
</feature>
<feature type="transmembrane region" description="Helical" evidence="1">
    <location>
        <begin position="40"/>
        <end position="60"/>
    </location>
</feature>
<feature type="topological domain" description="Lumenal" evidence="5">
    <location>
        <begin position="61"/>
        <end position="81"/>
    </location>
</feature>
<feature type="transmembrane region" description="Helical" evidence="1">
    <location>
        <begin position="82"/>
        <end position="102"/>
    </location>
</feature>
<feature type="topological domain" description="Cytoplasmic" evidence="5">
    <location>
        <begin position="103"/>
        <end position="120"/>
    </location>
</feature>
<feature type="transmembrane region" description="Helical" evidence="1">
    <location>
        <begin position="121"/>
        <end position="141"/>
    </location>
</feature>
<feature type="topological domain" description="Lumenal" evidence="5">
    <location>
        <begin position="142"/>
        <end position="168"/>
    </location>
</feature>
<feature type="transmembrane region" description="Helical" evidence="1">
    <location>
        <begin position="169"/>
        <end position="189"/>
    </location>
</feature>
<feature type="topological domain" description="Cytoplasmic" evidence="5">
    <location>
        <begin position="190"/>
        <end position="219"/>
    </location>
</feature>
<feature type="transmembrane region" description="Helical" evidence="1">
    <location>
        <begin position="220"/>
        <end position="240"/>
    </location>
</feature>
<feature type="transmembrane region" description="Helical" evidence="1">
    <location>
        <begin position="241"/>
        <end position="261"/>
    </location>
</feature>
<feature type="topological domain" description="Cytoplasmic" evidence="5">
    <location>
        <begin position="262"/>
        <end position="283"/>
    </location>
</feature>
<feature type="region of interest" description="Disordered" evidence="3">
    <location>
        <begin position="1"/>
        <end position="21"/>
    </location>
</feature>
<feature type="compositionally biased region" description="Low complexity" evidence="3">
    <location>
        <begin position="1"/>
        <end position="11"/>
    </location>
</feature>
<feature type="active site" evidence="2">
    <location>
        <position position="172"/>
    </location>
</feature>
<feature type="active site" evidence="2">
    <location>
        <position position="243"/>
    </location>
</feature>
<gene>
    <name evidence="6" type="primary">fitm-2</name>
    <name evidence="2" type="synonym">fit2</name>
    <name evidence="2" type="synonym">fitm2</name>
    <name evidence="6" type="ORF">ZK265.9</name>
</gene>